<accession>P24664</accession>
<reference key="1">
    <citation type="book" date="1979" name="Proceedings of Dai 30 kai tanpakushitsu kouzou touronkai kouen youshishuu">
        <authorList>
            <person name="Miyamoto K."/>
            <person name="Matsuo H."/>
            <person name="Narita K."/>
        </authorList>
    </citation>
    <scope>PROTEIN SEQUENCE</scope>
</reference>
<reference key="2">
    <citation type="journal article" date="1991" name="J. Biochem.">
        <title>Crystal structure of Streptomyces erythraeus trypsin at 2.7-A resolution.</title>
        <authorList>
            <person name="Yamane T."/>
            <person name="Kobuke M."/>
            <person name="Tsutsui H."/>
            <person name="Toida T."/>
            <person name="Suzuki A."/>
            <person name="Ashida T."/>
            <person name="Kawata Y."/>
            <person name="Sakiyama F."/>
        </authorList>
    </citation>
    <scope>X-RAY CRYSTALLOGRAPHY (2.7 ANGSTROMS)</scope>
    <scope>SEQUENCE REVISION</scope>
</reference>
<comment type="catalytic activity">
    <reaction>
        <text>Preferential cleavage: Arg-|-Xaa, Lys-|-Xaa.</text>
        <dbReference type="EC" id="3.4.21.4"/>
    </reaction>
</comment>
<comment type="miscellaneous">
    <text>Hardly autolyzes itself at all at its active pH range.</text>
</comment>
<comment type="similarity">
    <text evidence="2">Belongs to the peptidase S1 family.</text>
</comment>
<dbReference type="EC" id="3.4.21.4"/>
<dbReference type="PDB" id="4M7G">
    <property type="method" value="X-ray"/>
    <property type="resolution" value="0.81 A"/>
    <property type="chains" value="A=1-227"/>
</dbReference>
<dbReference type="PDB" id="5DK1">
    <property type="method" value="X-ray"/>
    <property type="resolution" value="0.94 A"/>
    <property type="chains" value="A=1-227"/>
</dbReference>
<dbReference type="PDBsum" id="4M7G"/>
<dbReference type="PDBsum" id="5DK1"/>
<dbReference type="SMR" id="P24664"/>
<dbReference type="IntAct" id="P24664">
    <property type="interactions" value="1"/>
</dbReference>
<dbReference type="MINT" id="P24664"/>
<dbReference type="MEROPS" id="S01.102"/>
<dbReference type="BRENDA" id="3.4.21.4">
    <property type="organism ID" value="5518"/>
</dbReference>
<dbReference type="EvolutionaryTrace" id="P24664"/>
<dbReference type="GO" id="GO:0004252">
    <property type="term" value="F:serine-type endopeptidase activity"/>
    <property type="evidence" value="ECO:0007669"/>
    <property type="project" value="UniProtKB-EC"/>
</dbReference>
<dbReference type="GO" id="GO:0006508">
    <property type="term" value="P:proteolysis"/>
    <property type="evidence" value="ECO:0007669"/>
    <property type="project" value="UniProtKB-KW"/>
</dbReference>
<dbReference type="CDD" id="cd00190">
    <property type="entry name" value="Tryp_SPc"/>
    <property type="match status" value="1"/>
</dbReference>
<dbReference type="FunFam" id="2.40.10.10:FF:000077">
    <property type="entry name" value="Predicted protein"/>
    <property type="match status" value="1"/>
</dbReference>
<dbReference type="Gene3D" id="2.40.10.10">
    <property type="entry name" value="Trypsin-like serine proteases"/>
    <property type="match status" value="1"/>
</dbReference>
<dbReference type="InterPro" id="IPR050430">
    <property type="entry name" value="Peptidase_S1"/>
</dbReference>
<dbReference type="InterPro" id="IPR009003">
    <property type="entry name" value="Peptidase_S1_PA"/>
</dbReference>
<dbReference type="InterPro" id="IPR043504">
    <property type="entry name" value="Peptidase_S1_PA_chymotrypsin"/>
</dbReference>
<dbReference type="InterPro" id="IPR001314">
    <property type="entry name" value="Peptidase_S1A"/>
</dbReference>
<dbReference type="InterPro" id="IPR001254">
    <property type="entry name" value="Trypsin_dom"/>
</dbReference>
<dbReference type="InterPro" id="IPR018114">
    <property type="entry name" value="TRYPSIN_HIS"/>
</dbReference>
<dbReference type="InterPro" id="IPR033116">
    <property type="entry name" value="TRYPSIN_SER"/>
</dbReference>
<dbReference type="PANTHER" id="PTHR24276:SF98">
    <property type="entry name" value="FI18310P1-RELATED"/>
    <property type="match status" value="1"/>
</dbReference>
<dbReference type="PANTHER" id="PTHR24276">
    <property type="entry name" value="POLYSERASE-RELATED"/>
    <property type="match status" value="1"/>
</dbReference>
<dbReference type="Pfam" id="PF00089">
    <property type="entry name" value="Trypsin"/>
    <property type="match status" value="1"/>
</dbReference>
<dbReference type="PRINTS" id="PR00722">
    <property type="entry name" value="CHYMOTRYPSIN"/>
</dbReference>
<dbReference type="SMART" id="SM00020">
    <property type="entry name" value="Tryp_SPc"/>
    <property type="match status" value="1"/>
</dbReference>
<dbReference type="SUPFAM" id="SSF50494">
    <property type="entry name" value="Trypsin-like serine proteases"/>
    <property type="match status" value="1"/>
</dbReference>
<dbReference type="PROSITE" id="PS50240">
    <property type="entry name" value="TRYPSIN_DOM"/>
    <property type="match status" value="1"/>
</dbReference>
<dbReference type="PROSITE" id="PS00134">
    <property type="entry name" value="TRYPSIN_HIS"/>
    <property type="match status" value="1"/>
</dbReference>
<dbReference type="PROSITE" id="PS00135">
    <property type="entry name" value="TRYPSIN_SER"/>
    <property type="match status" value="1"/>
</dbReference>
<evidence type="ECO:0000250" key="1"/>
<evidence type="ECO:0000255" key="2">
    <source>
        <dbReference type="PROSITE-ProRule" id="PRU00274"/>
    </source>
</evidence>
<evidence type="ECO:0007829" key="3">
    <source>
        <dbReference type="PDB" id="4M7G"/>
    </source>
</evidence>
<organism>
    <name type="scientific">Saccharopolyspora erythraea</name>
    <name type="common">Streptomyces erythraeus</name>
    <dbReference type="NCBI Taxonomy" id="1836"/>
    <lineage>
        <taxon>Bacteria</taxon>
        <taxon>Bacillati</taxon>
        <taxon>Actinomycetota</taxon>
        <taxon>Actinomycetes</taxon>
        <taxon>Pseudonocardiales</taxon>
        <taxon>Pseudonocardiaceae</taxon>
        <taxon>Saccharopolyspora</taxon>
    </lineage>
</organism>
<name>TRYP_SACER</name>
<sequence>IVGGEDANVQDHPFTVALVTPDGQQFCGGTLAAPNKVVTAAHCTVGSQPADINVVSGRTVMSSNIGTVSKVTNVWVHPEYQDAAKGFDVSVLTLEAPVKEAPIELAKADDAGYAPDTAATILGWGNTSEGGQQADHLQKATVPVNSDDTCKQAYGEYTPNAMVCAGVPEGGVDTCQGDSGGPMVVNNKLIGVTSWGEGCARPGKPGVYARVGAYYDVLMEQINAGAV</sequence>
<keyword id="KW-0002">3D-structure</keyword>
<keyword id="KW-0903">Direct protein sequencing</keyword>
<keyword id="KW-1015">Disulfide bond</keyword>
<keyword id="KW-0378">Hydrolase</keyword>
<keyword id="KW-0645">Protease</keyword>
<keyword id="KW-0720">Serine protease</keyword>
<protein>
    <recommendedName>
        <fullName>Trypsin</fullName>
        <ecNumber>3.4.21.4</ecNumber>
    </recommendedName>
    <alternativeName>
        <fullName>SET</fullName>
    </alternativeName>
</protein>
<proteinExistence type="evidence at protein level"/>
<feature type="chain" id="PRO_0000088718" description="Trypsin">
    <location>
        <begin position="1"/>
        <end position="227"/>
    </location>
</feature>
<feature type="domain" description="Peptidase S1" evidence="2">
    <location>
        <begin position="1"/>
        <end position="223"/>
    </location>
</feature>
<feature type="active site" description="Charge relay system">
    <location>
        <position position="42"/>
    </location>
</feature>
<feature type="active site" description="Charge relay system">
    <location>
        <position position="88"/>
    </location>
</feature>
<feature type="active site" description="Charge relay system">
    <location>
        <position position="179"/>
    </location>
</feature>
<feature type="site" description="Required for specificity" evidence="1">
    <location>
        <position position="173"/>
    </location>
</feature>
<feature type="disulfide bond">
    <location>
        <begin position="27"/>
        <end position="43"/>
    </location>
</feature>
<feature type="disulfide bond">
    <location>
        <begin position="150"/>
        <end position="164"/>
    </location>
</feature>
<feature type="disulfide bond">
    <location>
        <begin position="175"/>
        <end position="199"/>
    </location>
</feature>
<feature type="helix" evidence="3">
    <location>
        <begin position="9"/>
        <end position="11"/>
    </location>
</feature>
<feature type="strand" evidence="3">
    <location>
        <begin position="15"/>
        <end position="19"/>
    </location>
</feature>
<feature type="strand" evidence="3">
    <location>
        <begin position="25"/>
        <end position="33"/>
    </location>
</feature>
<feature type="strand" evidence="3">
    <location>
        <begin position="36"/>
        <end position="39"/>
    </location>
</feature>
<feature type="helix" evidence="3">
    <location>
        <begin position="41"/>
        <end position="44"/>
    </location>
</feature>
<feature type="helix" evidence="3">
    <location>
        <begin position="49"/>
        <end position="51"/>
    </location>
</feature>
<feature type="strand" evidence="3">
    <location>
        <begin position="53"/>
        <end position="57"/>
    </location>
</feature>
<feature type="strand" evidence="3">
    <location>
        <begin position="66"/>
        <end position="76"/>
    </location>
</feature>
<feature type="helix" evidence="3">
    <location>
        <begin position="83"/>
        <end position="85"/>
    </location>
</feature>
<feature type="strand" evidence="3">
    <location>
        <begin position="90"/>
        <end position="96"/>
    </location>
</feature>
<feature type="helix" evidence="3">
    <location>
        <begin position="111"/>
        <end position="113"/>
    </location>
</feature>
<feature type="strand" evidence="3">
    <location>
        <begin position="118"/>
        <end position="128"/>
    </location>
</feature>
<feature type="strand" evidence="3">
    <location>
        <begin position="138"/>
        <end position="144"/>
    </location>
</feature>
<feature type="helix" evidence="3">
    <location>
        <begin position="147"/>
        <end position="153"/>
    </location>
</feature>
<feature type="turn" evidence="3">
    <location>
        <begin position="159"/>
        <end position="161"/>
    </location>
</feature>
<feature type="strand" evidence="3">
    <location>
        <begin position="162"/>
        <end position="165"/>
    </location>
</feature>
<feature type="strand" evidence="3">
    <location>
        <begin position="182"/>
        <end position="185"/>
    </location>
</feature>
<feature type="strand" evidence="3">
    <location>
        <begin position="188"/>
        <end position="195"/>
    </location>
</feature>
<feature type="strand" evidence="3">
    <location>
        <begin position="197"/>
        <end position="200"/>
    </location>
</feature>
<feature type="strand" evidence="3">
    <location>
        <begin position="206"/>
        <end position="210"/>
    </location>
</feature>
<feature type="helix" evidence="3">
    <location>
        <begin position="211"/>
        <end position="214"/>
    </location>
</feature>
<feature type="helix" evidence="3">
    <location>
        <begin position="215"/>
        <end position="222"/>
    </location>
</feature>